<keyword id="KW-0050">Antiport</keyword>
<keyword id="KW-1003">Cell membrane</keyword>
<keyword id="KW-0472">Membrane</keyword>
<keyword id="KW-0597">Phosphoprotein</keyword>
<keyword id="KW-1185">Reference proteome</keyword>
<keyword id="KW-0812">Transmembrane</keyword>
<keyword id="KW-1133">Transmembrane helix</keyword>
<keyword id="KW-0813">Transport</keyword>
<proteinExistence type="evidence at protein level"/>
<accession>P53283</accession>
<accession>D6VUR9</accession>
<feature type="chain" id="PRO_0000173439" description="Polyamine transporter 2">
    <location>
        <begin position="1"/>
        <end position="614"/>
    </location>
</feature>
<feature type="topological domain" description="Cytoplasmic" evidence="1">
    <location>
        <begin position="1"/>
        <end position="173"/>
    </location>
</feature>
<feature type="transmembrane region" description="Helical" evidence="1">
    <location>
        <begin position="174"/>
        <end position="194"/>
    </location>
</feature>
<feature type="topological domain" description="Extracellular" evidence="1">
    <location>
        <begin position="195"/>
        <end position="206"/>
    </location>
</feature>
<feature type="transmembrane region" description="Helical" evidence="1">
    <location>
        <begin position="207"/>
        <end position="227"/>
    </location>
</feature>
<feature type="topological domain" description="Cytoplasmic" evidence="1">
    <location>
        <begin position="228"/>
        <end position="236"/>
    </location>
</feature>
<feature type="transmembrane region" description="Helical" evidence="1">
    <location>
        <begin position="237"/>
        <end position="257"/>
    </location>
</feature>
<feature type="topological domain" description="Extracellular" evidence="1">
    <location>
        <begin position="258"/>
        <end position="266"/>
    </location>
</feature>
<feature type="transmembrane region" description="Helical" evidence="1">
    <location>
        <begin position="267"/>
        <end position="287"/>
    </location>
</feature>
<feature type="topological domain" description="Cytoplasmic" evidence="1">
    <location>
        <begin position="288"/>
        <end position="297"/>
    </location>
</feature>
<feature type="transmembrane region" description="Helical" evidence="1">
    <location>
        <begin position="298"/>
        <end position="318"/>
    </location>
</feature>
<feature type="topological domain" description="Extracellular" evidence="1">
    <location>
        <begin position="319"/>
        <end position="326"/>
    </location>
</feature>
<feature type="transmembrane region" description="Helical" evidence="1">
    <location>
        <begin position="327"/>
        <end position="347"/>
    </location>
</feature>
<feature type="topological domain" description="Cytoplasmic" evidence="1">
    <location>
        <begin position="348"/>
        <end position="407"/>
    </location>
</feature>
<feature type="transmembrane region" description="Helical" evidence="1">
    <location>
        <begin position="408"/>
        <end position="428"/>
    </location>
</feature>
<feature type="topological domain" description="Extracellular" evidence="1">
    <location>
        <begin position="429"/>
        <end position="437"/>
    </location>
</feature>
<feature type="transmembrane region" description="Helical" evidence="1">
    <location>
        <begin position="438"/>
        <end position="458"/>
    </location>
</feature>
<feature type="topological domain" description="Cytoplasmic" evidence="1">
    <location>
        <begin position="459"/>
        <end position="478"/>
    </location>
</feature>
<feature type="transmembrane region" description="Helical" evidence="1">
    <location>
        <begin position="479"/>
        <end position="499"/>
    </location>
</feature>
<feature type="topological domain" description="Extracellular" evidence="1">
    <location>
        <begin position="500"/>
        <end position="503"/>
    </location>
</feature>
<feature type="transmembrane region" description="Helical" evidence="1">
    <location>
        <begin position="504"/>
        <end position="524"/>
    </location>
</feature>
<feature type="topological domain" description="Cytoplasmic" evidence="1">
    <location>
        <begin position="525"/>
        <end position="541"/>
    </location>
</feature>
<feature type="transmembrane region" description="Helical" evidence="1">
    <location>
        <begin position="542"/>
        <end position="562"/>
    </location>
</feature>
<feature type="topological domain" description="Extracellular" evidence="1">
    <location>
        <begin position="563"/>
        <end position="574"/>
    </location>
</feature>
<feature type="transmembrane region" description="Helical" evidence="1">
    <location>
        <begin position="575"/>
        <end position="595"/>
    </location>
</feature>
<feature type="topological domain" description="Cytoplasmic" evidence="1">
    <location>
        <begin position="596"/>
        <end position="614"/>
    </location>
</feature>
<feature type="region of interest" description="Disordered" evidence="2">
    <location>
        <begin position="1"/>
        <end position="40"/>
    </location>
</feature>
<feature type="region of interest" description="Disordered" evidence="2">
    <location>
        <begin position="99"/>
        <end position="144"/>
    </location>
</feature>
<feature type="compositionally biased region" description="Polar residues" evidence="2">
    <location>
        <begin position="99"/>
        <end position="122"/>
    </location>
</feature>
<feature type="compositionally biased region" description="Acidic residues" evidence="2">
    <location>
        <begin position="126"/>
        <end position="144"/>
    </location>
</feature>
<feature type="modified residue" description="Phosphoserine" evidence="8 9">
    <location>
        <position position="50"/>
    </location>
</feature>
<name>TPO2_YEAST</name>
<reference key="1">
    <citation type="journal article" date="1997" name="Nature">
        <title>The nucleotide sequence of Saccharomyces cerevisiae chromosome VII.</title>
        <authorList>
            <person name="Tettelin H."/>
            <person name="Agostoni-Carbone M.L."/>
            <person name="Albermann K."/>
            <person name="Albers M."/>
            <person name="Arroyo J."/>
            <person name="Backes U."/>
            <person name="Barreiros T."/>
            <person name="Bertani I."/>
            <person name="Bjourson A.J."/>
            <person name="Brueckner M."/>
            <person name="Bruschi C.V."/>
            <person name="Carignani G."/>
            <person name="Castagnoli L."/>
            <person name="Cerdan E."/>
            <person name="Clemente M.L."/>
            <person name="Coblenz A."/>
            <person name="Coglievina M."/>
            <person name="Coissac E."/>
            <person name="Defoor E."/>
            <person name="Del Bino S."/>
            <person name="Delius H."/>
            <person name="Delneri D."/>
            <person name="de Wergifosse P."/>
            <person name="Dujon B."/>
            <person name="Durand P."/>
            <person name="Entian K.-D."/>
            <person name="Eraso P."/>
            <person name="Escribano V."/>
            <person name="Fabiani L."/>
            <person name="Fartmann B."/>
            <person name="Feroli F."/>
            <person name="Feuermann M."/>
            <person name="Frontali L."/>
            <person name="Garcia-Gonzalez M."/>
            <person name="Garcia-Saez M.I."/>
            <person name="Goffeau A."/>
            <person name="Guerreiro P."/>
            <person name="Hani J."/>
            <person name="Hansen M."/>
            <person name="Hebling U."/>
            <person name="Hernandez K."/>
            <person name="Heumann K."/>
            <person name="Hilger F."/>
            <person name="Hofmann B."/>
            <person name="Indge K.J."/>
            <person name="James C.M."/>
            <person name="Klima R."/>
            <person name="Koetter P."/>
            <person name="Kramer B."/>
            <person name="Kramer W."/>
            <person name="Lauquin G."/>
            <person name="Leuther H."/>
            <person name="Louis E.J."/>
            <person name="Maillier E."/>
            <person name="Marconi A."/>
            <person name="Martegani E."/>
            <person name="Mazon M.J."/>
            <person name="Mazzoni C."/>
            <person name="McReynolds A.D.K."/>
            <person name="Melchioretto P."/>
            <person name="Mewes H.-W."/>
            <person name="Minenkova O."/>
            <person name="Mueller-Auer S."/>
            <person name="Nawrocki A."/>
            <person name="Netter P."/>
            <person name="Neu R."/>
            <person name="Nombela C."/>
            <person name="Oliver S.G."/>
            <person name="Panzeri L."/>
            <person name="Paoluzi S."/>
            <person name="Plevani P."/>
            <person name="Portetelle D."/>
            <person name="Portillo F."/>
            <person name="Potier S."/>
            <person name="Purnelle B."/>
            <person name="Rieger M."/>
            <person name="Riles L."/>
            <person name="Rinaldi T."/>
            <person name="Robben J."/>
            <person name="Rodrigues-Pousada C."/>
            <person name="Rodriguez-Belmonte E."/>
            <person name="Rodriguez-Torres A.M."/>
            <person name="Rose M."/>
            <person name="Ruzzi M."/>
            <person name="Saliola M."/>
            <person name="Sanchez-Perez M."/>
            <person name="Schaefer B."/>
            <person name="Schaefer M."/>
            <person name="Scharfe M."/>
            <person name="Schmidheini T."/>
            <person name="Schreer A."/>
            <person name="Skala J."/>
            <person name="Souciet J.-L."/>
            <person name="Steensma H.Y."/>
            <person name="Talla E."/>
            <person name="Thierry A."/>
            <person name="Vandenbol M."/>
            <person name="van der Aart Q.J.M."/>
            <person name="Van Dyck L."/>
            <person name="Vanoni M."/>
            <person name="Verhasselt P."/>
            <person name="Voet M."/>
            <person name="Volckaert G."/>
            <person name="Wambutt R."/>
            <person name="Watson M.D."/>
            <person name="Weber N."/>
            <person name="Wedler E."/>
            <person name="Wedler H."/>
            <person name="Wipfli P."/>
            <person name="Wolf K."/>
            <person name="Wright L.F."/>
            <person name="Zaccaria P."/>
            <person name="Zimmermann M."/>
            <person name="Zollner A."/>
            <person name="Kleine K."/>
        </authorList>
    </citation>
    <scope>NUCLEOTIDE SEQUENCE [LARGE SCALE GENOMIC DNA]</scope>
    <source>
        <strain>ATCC 204508 / S288c</strain>
    </source>
</reference>
<reference key="2">
    <citation type="journal article" date="2014" name="G3 (Bethesda)">
        <title>The reference genome sequence of Saccharomyces cerevisiae: Then and now.</title>
        <authorList>
            <person name="Engel S.R."/>
            <person name="Dietrich F.S."/>
            <person name="Fisk D.G."/>
            <person name="Binkley G."/>
            <person name="Balakrishnan R."/>
            <person name="Costanzo M.C."/>
            <person name="Dwight S.S."/>
            <person name="Hitz B.C."/>
            <person name="Karra K."/>
            <person name="Nash R.S."/>
            <person name="Weng S."/>
            <person name="Wong E.D."/>
            <person name="Lloyd P."/>
            <person name="Skrzypek M.S."/>
            <person name="Miyasato S.R."/>
            <person name="Simison M."/>
            <person name="Cherry J.M."/>
        </authorList>
    </citation>
    <scope>GENOME REANNOTATION</scope>
    <source>
        <strain>ATCC 204508 / S288c</strain>
    </source>
</reference>
<reference key="3">
    <citation type="journal article" date="2001" name="Biochem. J.">
        <title>Multiple polyamine transport systems on the vacuolar membrane in yeast.</title>
        <authorList>
            <person name="Tomitori H."/>
            <person name="Kashiwagi K."/>
            <person name="Asakawa T."/>
            <person name="Kakinuma Y."/>
            <person name="Michael A.J."/>
            <person name="Igarashi K."/>
        </authorList>
    </citation>
    <scope>FUNCTION</scope>
</reference>
<reference key="4">
    <citation type="journal article" date="2003" name="J. Biol. Chem.">
        <title>Localization and function of the yeast multidrug transporter Tpo1p.</title>
        <authorList>
            <person name="Albertsen M."/>
            <person name="Bellahn I."/>
            <person name="Kraemer R."/>
            <person name="Waffenschmidt S."/>
        </authorList>
    </citation>
    <scope>FUNCTION</scope>
    <scope>SUBCELLULAR LOCATION</scope>
</reference>
<reference key="5">
    <citation type="journal article" date="2003" name="Nature">
        <title>Global analysis of protein localization in budding yeast.</title>
        <authorList>
            <person name="Huh W.-K."/>
            <person name="Falvo J.V."/>
            <person name="Gerke L.C."/>
            <person name="Carroll A.S."/>
            <person name="Howson R.W."/>
            <person name="Weissman J.S."/>
            <person name="O'Shea E.K."/>
        </authorList>
    </citation>
    <scope>SUBCELLULAR LOCATION [LARGE SCALE ANALYSIS]</scope>
</reference>
<reference key="6">
    <citation type="journal article" date="2004" name="Appl. Environ. Microbiol.">
        <title>Exposure of Saccharomyces cerevisiae to acetaldehyde induces sulfur amino acid metabolism and polyamine transporter genes, which depend on Met4p and Haa1p transcription factors, respectively.</title>
        <authorList>
            <person name="Aranda A."/>
            <person name="del Olmo M."/>
        </authorList>
    </citation>
    <scope>INDUCTION</scope>
</reference>
<reference key="7">
    <citation type="journal article" date="2006" name="Proc. Natl. Acad. Sci. U.S.A.">
        <title>A global topology map of the Saccharomyces cerevisiae membrane proteome.</title>
        <authorList>
            <person name="Kim H."/>
            <person name="Melen K."/>
            <person name="Oesterberg M."/>
            <person name="von Heijne G."/>
        </authorList>
    </citation>
    <scope>TOPOLOGY [LARGE SCALE ANALYSIS]</scope>
    <source>
        <strain>ATCC 208353 / W303-1A</strain>
    </source>
</reference>
<reference key="8">
    <citation type="journal article" date="2007" name="J. Proteome Res.">
        <title>Large-scale phosphorylation analysis of alpha-factor-arrested Saccharomyces cerevisiae.</title>
        <authorList>
            <person name="Li X."/>
            <person name="Gerber S.A."/>
            <person name="Rudner A.D."/>
            <person name="Beausoleil S.A."/>
            <person name="Haas W."/>
            <person name="Villen J."/>
            <person name="Elias J.E."/>
            <person name="Gygi S.P."/>
        </authorList>
    </citation>
    <scope>IDENTIFICATION BY MASS SPECTROMETRY [LARGE SCALE ANALYSIS]</scope>
    <source>
        <strain>ADR376</strain>
    </source>
</reference>
<reference key="9">
    <citation type="journal article" date="2008" name="Mol. Cell. Proteomics">
        <title>A multidimensional chromatography technology for in-depth phosphoproteome analysis.</title>
        <authorList>
            <person name="Albuquerque C.P."/>
            <person name="Smolka M.B."/>
            <person name="Payne S.H."/>
            <person name="Bafna V."/>
            <person name="Eng J."/>
            <person name="Zhou H."/>
        </authorList>
    </citation>
    <scope>PHOSPHORYLATION [LARGE SCALE ANALYSIS] AT SER-50</scope>
    <scope>IDENTIFICATION BY MASS SPECTROMETRY [LARGE SCALE ANALYSIS]</scope>
</reference>
<reference key="10">
    <citation type="journal article" date="2009" name="Science">
        <title>Global analysis of Cdk1 substrate phosphorylation sites provides insights into evolution.</title>
        <authorList>
            <person name="Holt L.J."/>
            <person name="Tuch B.B."/>
            <person name="Villen J."/>
            <person name="Johnson A.D."/>
            <person name="Gygi S.P."/>
            <person name="Morgan D.O."/>
        </authorList>
    </citation>
    <scope>PHOSPHORYLATION [LARGE SCALE ANALYSIS] AT SER-50</scope>
    <scope>IDENTIFICATION BY MASS SPECTROMETRY [LARGE SCALE ANALYSIS]</scope>
</reference>
<protein>
    <recommendedName>
        <fullName>Polyamine transporter 2</fullName>
    </recommendedName>
</protein>
<gene>
    <name type="primary">TPO2</name>
    <name type="ordered locus">YGR138C</name>
    <name type="ORF">G6417</name>
</gene>
<evidence type="ECO:0000255" key="1"/>
<evidence type="ECO:0000256" key="2">
    <source>
        <dbReference type="SAM" id="MobiDB-lite"/>
    </source>
</evidence>
<evidence type="ECO:0000269" key="3">
    <source>
    </source>
</evidence>
<evidence type="ECO:0000269" key="4">
    <source>
    </source>
</evidence>
<evidence type="ECO:0000269" key="5">
    <source>
    </source>
</evidence>
<evidence type="ECO:0000269" key="6">
    <source>
    </source>
</evidence>
<evidence type="ECO:0000305" key="7"/>
<evidence type="ECO:0007744" key="8">
    <source>
    </source>
</evidence>
<evidence type="ECO:0007744" key="9">
    <source>
    </source>
</evidence>
<sequence length="614" mass="67589">MSDQESVVSFNSQNTSMVDVEGQQPQQYVPSKTNSRANQLKLTKTETVKSLQDLGVTSAAPVPDINAPQTAKNNIFPEEYTMETPSGLVPVATLQSMGRTASALSRTRTKQLNRTATNSSSTGKEEMEEEETEEREDQSGENELDPEIEFVTFVTGDPENPHNWPSWVRWSYTVLLSILVICVAYGSACISGGLGTVEKKYHVGMEAAILSCSLMVIGFSLGPLIWSPVSDLYGRRVAYFVSMGLYVIFNIPCALAPNLGCLLACRFLCGVWSSSGLCLVGGSIADMFPSETRGKAIAFFAFAPYVGPVVGPLVNGFISVSTGRMDLIFWVNMAFAGVMWIISSAIPETYAPVILKRKAARLRKETGNPKIMTEQEAQGVSMSEMMRACLLRPLYFAVTEPVLVATCFYVCLIYSLLYAFFFAFPVIFGELYGYKDNLVGLMFIPIVIGALWALATTFYCENKYLQIVKQRKPTPEDRLLGAKIGAPFAAIALWILGATAYKHIIWVGPASAGLAFGFGMVLIYYSLNNYIIDCYVQYASSALATKVFLRSAGGAAFPLFTIQMYHKLNLHWGSWLLAFISTAMIALPFAFSYWGKGLRHKLSKKDYSIDSVEM</sequence>
<dbReference type="EMBL" id="Z72923">
    <property type="protein sequence ID" value="CAA97151.1"/>
    <property type="molecule type" value="Genomic_DNA"/>
</dbReference>
<dbReference type="EMBL" id="BK006941">
    <property type="protein sequence ID" value="DAA08230.1"/>
    <property type="molecule type" value="Genomic_DNA"/>
</dbReference>
<dbReference type="PIR" id="S64447">
    <property type="entry name" value="S64447"/>
</dbReference>
<dbReference type="RefSeq" id="NP_011654.1">
    <property type="nucleotide sequence ID" value="NM_001181267.1"/>
</dbReference>
<dbReference type="SMR" id="P53283"/>
<dbReference type="BioGRID" id="33385">
    <property type="interactions" value="70"/>
</dbReference>
<dbReference type="DIP" id="DIP-7902N"/>
<dbReference type="FunCoup" id="P53283">
    <property type="interactions" value="112"/>
</dbReference>
<dbReference type="IntAct" id="P53283">
    <property type="interactions" value="29"/>
</dbReference>
<dbReference type="MINT" id="P53283"/>
<dbReference type="STRING" id="4932.YGR138C"/>
<dbReference type="TCDB" id="2.A.1.2.67">
    <property type="family name" value="the major facilitator superfamily (mfs)"/>
</dbReference>
<dbReference type="iPTMnet" id="P53283"/>
<dbReference type="PaxDb" id="4932-YGR138C"/>
<dbReference type="PeptideAtlas" id="P53283"/>
<dbReference type="EnsemblFungi" id="YGR138C_mRNA">
    <property type="protein sequence ID" value="YGR138C"/>
    <property type="gene ID" value="YGR138C"/>
</dbReference>
<dbReference type="GeneID" id="853039"/>
<dbReference type="KEGG" id="sce:YGR138C"/>
<dbReference type="AGR" id="SGD:S000003370"/>
<dbReference type="SGD" id="S000003370">
    <property type="gene designation" value="TPO2"/>
</dbReference>
<dbReference type="VEuPathDB" id="FungiDB:YGR138C"/>
<dbReference type="eggNOG" id="KOG0255">
    <property type="taxonomic scope" value="Eukaryota"/>
</dbReference>
<dbReference type="GeneTree" id="ENSGT00940000176486"/>
<dbReference type="HOGENOM" id="CLU_008455_11_5_1"/>
<dbReference type="InParanoid" id="P53283"/>
<dbReference type="OMA" id="TWKEADP"/>
<dbReference type="OrthoDB" id="3936150at2759"/>
<dbReference type="BioCyc" id="YEAST:G3O-30843-MONOMER"/>
<dbReference type="BioGRID-ORCS" id="853039">
    <property type="hits" value="2 hits in 10 CRISPR screens"/>
</dbReference>
<dbReference type="PRO" id="PR:P53283"/>
<dbReference type="Proteomes" id="UP000002311">
    <property type="component" value="Chromosome VII"/>
</dbReference>
<dbReference type="RNAct" id="P53283">
    <property type="molecule type" value="protein"/>
</dbReference>
<dbReference type="GO" id="GO:0071944">
    <property type="term" value="C:cell periphery"/>
    <property type="evidence" value="ECO:0007005"/>
    <property type="project" value="SGD"/>
</dbReference>
<dbReference type="GO" id="GO:0000329">
    <property type="term" value="C:fungal-type vacuole membrane"/>
    <property type="evidence" value="ECO:0000315"/>
    <property type="project" value="SGD"/>
</dbReference>
<dbReference type="GO" id="GO:0005886">
    <property type="term" value="C:plasma membrane"/>
    <property type="evidence" value="ECO:0000314"/>
    <property type="project" value="SGD"/>
</dbReference>
<dbReference type="GO" id="GO:0015297">
    <property type="term" value="F:antiporter activity"/>
    <property type="evidence" value="ECO:0007669"/>
    <property type="project" value="UniProtKB-KW"/>
</dbReference>
<dbReference type="GO" id="GO:0000297">
    <property type="term" value="F:spermine transmembrane transporter activity"/>
    <property type="evidence" value="ECO:0000315"/>
    <property type="project" value="SGD"/>
</dbReference>
<dbReference type="GO" id="GO:0000296">
    <property type="term" value="P:spermine transport"/>
    <property type="evidence" value="ECO:0000315"/>
    <property type="project" value="SGD"/>
</dbReference>
<dbReference type="GO" id="GO:0055085">
    <property type="term" value="P:transmembrane transport"/>
    <property type="evidence" value="ECO:0000318"/>
    <property type="project" value="GO_Central"/>
</dbReference>
<dbReference type="CDD" id="cd17323">
    <property type="entry name" value="MFS_Tpo1_MDR_like"/>
    <property type="match status" value="1"/>
</dbReference>
<dbReference type="FunFam" id="1.20.1250.20:FF:000011">
    <property type="entry name" value="MFS multidrug transporter, putative"/>
    <property type="match status" value="1"/>
</dbReference>
<dbReference type="Gene3D" id="1.20.1250.20">
    <property type="entry name" value="MFS general substrate transporter like domains"/>
    <property type="match status" value="1"/>
</dbReference>
<dbReference type="InterPro" id="IPR011701">
    <property type="entry name" value="MFS"/>
</dbReference>
<dbReference type="InterPro" id="IPR020846">
    <property type="entry name" value="MFS_dom"/>
</dbReference>
<dbReference type="InterPro" id="IPR036259">
    <property type="entry name" value="MFS_trans_sf"/>
</dbReference>
<dbReference type="PANTHER" id="PTHR23502">
    <property type="entry name" value="MAJOR FACILITATOR SUPERFAMILY"/>
    <property type="match status" value="1"/>
</dbReference>
<dbReference type="PANTHER" id="PTHR23502:SF132">
    <property type="entry name" value="POLYAMINE TRANSPORTER 2-RELATED"/>
    <property type="match status" value="1"/>
</dbReference>
<dbReference type="Pfam" id="PF07690">
    <property type="entry name" value="MFS_1"/>
    <property type="match status" value="1"/>
</dbReference>
<dbReference type="SUPFAM" id="SSF103473">
    <property type="entry name" value="MFS general substrate transporter"/>
    <property type="match status" value="1"/>
</dbReference>
<dbReference type="PROSITE" id="PS50850">
    <property type="entry name" value="MFS"/>
    <property type="match status" value="1"/>
</dbReference>
<organism>
    <name type="scientific">Saccharomyces cerevisiae (strain ATCC 204508 / S288c)</name>
    <name type="common">Baker's yeast</name>
    <dbReference type="NCBI Taxonomy" id="559292"/>
    <lineage>
        <taxon>Eukaryota</taxon>
        <taxon>Fungi</taxon>
        <taxon>Dikarya</taxon>
        <taxon>Ascomycota</taxon>
        <taxon>Saccharomycotina</taxon>
        <taxon>Saccharomycetes</taxon>
        <taxon>Saccharomycetales</taxon>
        <taxon>Saccharomycetaceae</taxon>
        <taxon>Saccharomyces</taxon>
    </lineage>
</organism>
<comment type="function">
    <text evidence="3 4">Cell membrane polyamine/proton antiporter, involved in the detoxification of excess polyamines in the cytoplasm. Recognizes spermine, but not spermidine.</text>
</comment>
<comment type="interaction">
    <interactant intactId="EBI-2044753">
        <id>P53283</id>
    </interactant>
    <interactant intactId="EBI-34275">
        <id>Q06451</id>
        <label>TPO3</label>
    </interactant>
    <organismsDiffer>false</organismsDiffer>
    <experiments>3</experiments>
</comment>
<comment type="subcellular location">
    <subcellularLocation>
        <location evidence="4 5">Cell membrane</location>
        <topology evidence="4 5">Multi-pass membrane protein</topology>
    </subcellularLocation>
</comment>
<comment type="induction">
    <text evidence="6">By transcription factor HAA1 in response to acetaldehyde accumulation.</text>
</comment>
<comment type="similarity">
    <text evidence="7">Belongs to the major facilitator superfamily. DHA1 family. Polyamines/proton antiporter (TC 2.A.1.2.16) subfamily.</text>
</comment>